<accession>A9IRT7</accession>
<protein>
    <recommendedName>
        <fullName evidence="1">Large ribosomal subunit protein bL9</fullName>
    </recommendedName>
    <alternativeName>
        <fullName evidence="2">50S ribosomal protein L9</fullName>
    </alternativeName>
</protein>
<evidence type="ECO:0000255" key="1">
    <source>
        <dbReference type="HAMAP-Rule" id="MF_00503"/>
    </source>
</evidence>
<evidence type="ECO:0000305" key="2"/>
<keyword id="KW-0687">Ribonucleoprotein</keyword>
<keyword id="KW-0689">Ribosomal protein</keyword>
<keyword id="KW-0694">RNA-binding</keyword>
<keyword id="KW-0699">rRNA-binding</keyword>
<feature type="chain" id="PRO_1000081465" description="Large ribosomal subunit protein bL9">
    <location>
        <begin position="1"/>
        <end position="198"/>
    </location>
</feature>
<comment type="function">
    <text evidence="1">Binds to the 23S rRNA.</text>
</comment>
<comment type="similarity">
    <text evidence="1">Belongs to the bacterial ribosomal protein bL9 family.</text>
</comment>
<proteinExistence type="inferred from homology"/>
<name>RL9_BART1</name>
<sequence>MDIILLERIPRLGQMGDIVSVKDGYARNFLLPQGKALRANEANKKHFETQRAQLEARNLERKSEAQKIAEKLDGQSFIAVRSAGETGQLYGSVSTRDIAEIITDEGFSIGRNQIELNHPIKMIGLHTITLSLHPEVQISVVINVARSTSEAQRQAEGETLTSAEEIYNLQEEILEENQEELLVEEINDNDINSPHQEA</sequence>
<reference key="1">
    <citation type="journal article" date="2007" name="Nat. Genet.">
        <title>Genomic analysis of Bartonella identifies type IV secretion systems as host adaptability factors.</title>
        <authorList>
            <person name="Saenz H.L."/>
            <person name="Engel P."/>
            <person name="Stoeckli M.C."/>
            <person name="Lanz C."/>
            <person name="Raddatz G."/>
            <person name="Vayssier-Taussat M."/>
            <person name="Birtles R."/>
            <person name="Schuster S.C."/>
            <person name="Dehio C."/>
        </authorList>
    </citation>
    <scope>NUCLEOTIDE SEQUENCE [LARGE SCALE GENOMIC DNA]</scope>
    <source>
        <strain>CIP 105476 / IBS 506</strain>
    </source>
</reference>
<organism>
    <name type="scientific">Bartonella tribocorum (strain CIP 105476 / IBS 506)</name>
    <dbReference type="NCBI Taxonomy" id="382640"/>
    <lineage>
        <taxon>Bacteria</taxon>
        <taxon>Pseudomonadati</taxon>
        <taxon>Pseudomonadota</taxon>
        <taxon>Alphaproteobacteria</taxon>
        <taxon>Hyphomicrobiales</taxon>
        <taxon>Bartonellaceae</taxon>
        <taxon>Bartonella</taxon>
    </lineage>
</organism>
<dbReference type="EMBL" id="AM260525">
    <property type="protein sequence ID" value="CAK01221.1"/>
    <property type="molecule type" value="Genomic_DNA"/>
</dbReference>
<dbReference type="RefSeq" id="WP_012231334.1">
    <property type="nucleotide sequence ID" value="NC_010161.1"/>
</dbReference>
<dbReference type="SMR" id="A9IRT7"/>
<dbReference type="KEGG" id="btr:BT_0811"/>
<dbReference type="eggNOG" id="COG0359">
    <property type="taxonomic scope" value="Bacteria"/>
</dbReference>
<dbReference type="HOGENOM" id="CLU_078938_1_0_5"/>
<dbReference type="Proteomes" id="UP000001592">
    <property type="component" value="Chromosome"/>
</dbReference>
<dbReference type="GO" id="GO:1990904">
    <property type="term" value="C:ribonucleoprotein complex"/>
    <property type="evidence" value="ECO:0007669"/>
    <property type="project" value="UniProtKB-KW"/>
</dbReference>
<dbReference type="GO" id="GO:0005840">
    <property type="term" value="C:ribosome"/>
    <property type="evidence" value="ECO:0007669"/>
    <property type="project" value="UniProtKB-KW"/>
</dbReference>
<dbReference type="GO" id="GO:0019843">
    <property type="term" value="F:rRNA binding"/>
    <property type="evidence" value="ECO:0007669"/>
    <property type="project" value="UniProtKB-UniRule"/>
</dbReference>
<dbReference type="GO" id="GO:0003735">
    <property type="term" value="F:structural constituent of ribosome"/>
    <property type="evidence" value="ECO:0007669"/>
    <property type="project" value="InterPro"/>
</dbReference>
<dbReference type="GO" id="GO:0006412">
    <property type="term" value="P:translation"/>
    <property type="evidence" value="ECO:0007669"/>
    <property type="project" value="UniProtKB-UniRule"/>
</dbReference>
<dbReference type="Gene3D" id="3.10.430.100">
    <property type="entry name" value="Ribosomal protein L9, C-terminal domain"/>
    <property type="match status" value="1"/>
</dbReference>
<dbReference type="Gene3D" id="3.40.5.10">
    <property type="entry name" value="Ribosomal protein L9, N-terminal domain"/>
    <property type="match status" value="1"/>
</dbReference>
<dbReference type="HAMAP" id="MF_00503">
    <property type="entry name" value="Ribosomal_bL9"/>
    <property type="match status" value="1"/>
</dbReference>
<dbReference type="InterPro" id="IPR000244">
    <property type="entry name" value="Ribosomal_bL9"/>
</dbReference>
<dbReference type="InterPro" id="IPR009027">
    <property type="entry name" value="Ribosomal_bL9/RNase_H1_N"/>
</dbReference>
<dbReference type="InterPro" id="IPR020594">
    <property type="entry name" value="Ribosomal_bL9_bac/chp"/>
</dbReference>
<dbReference type="InterPro" id="IPR020069">
    <property type="entry name" value="Ribosomal_bL9_C"/>
</dbReference>
<dbReference type="InterPro" id="IPR036791">
    <property type="entry name" value="Ribosomal_bL9_C_sf"/>
</dbReference>
<dbReference type="InterPro" id="IPR020070">
    <property type="entry name" value="Ribosomal_bL9_N"/>
</dbReference>
<dbReference type="InterPro" id="IPR036935">
    <property type="entry name" value="Ribosomal_bL9_N_sf"/>
</dbReference>
<dbReference type="NCBIfam" id="TIGR00158">
    <property type="entry name" value="L9"/>
    <property type="match status" value="1"/>
</dbReference>
<dbReference type="PANTHER" id="PTHR21368">
    <property type="entry name" value="50S RIBOSOMAL PROTEIN L9"/>
    <property type="match status" value="1"/>
</dbReference>
<dbReference type="Pfam" id="PF03948">
    <property type="entry name" value="Ribosomal_L9_C"/>
    <property type="match status" value="1"/>
</dbReference>
<dbReference type="Pfam" id="PF01281">
    <property type="entry name" value="Ribosomal_L9_N"/>
    <property type="match status" value="1"/>
</dbReference>
<dbReference type="SUPFAM" id="SSF55658">
    <property type="entry name" value="L9 N-domain-like"/>
    <property type="match status" value="1"/>
</dbReference>
<dbReference type="SUPFAM" id="SSF55653">
    <property type="entry name" value="Ribosomal protein L9 C-domain"/>
    <property type="match status" value="1"/>
</dbReference>
<dbReference type="PROSITE" id="PS00651">
    <property type="entry name" value="RIBOSOMAL_L9"/>
    <property type="match status" value="1"/>
</dbReference>
<gene>
    <name evidence="1" type="primary">rplI</name>
    <name type="ordered locus">BT_0811</name>
</gene>